<keyword id="KW-0227">DNA damage</keyword>
<keyword id="KW-0234">DNA repair</keyword>
<keyword id="KW-0255">Endonuclease</keyword>
<keyword id="KW-0378">Hydrolase</keyword>
<keyword id="KW-0479">Metal-binding</keyword>
<keyword id="KW-0540">Nuclease</keyword>
<keyword id="KW-0862">Zinc</keyword>
<feature type="chain" id="PRO_0000190846" description="Probable endonuclease 4">
    <location>
        <begin position="1"/>
        <end position="297"/>
    </location>
</feature>
<feature type="binding site" evidence="1">
    <location>
        <position position="69"/>
    </location>
    <ligand>
        <name>Zn(2+)</name>
        <dbReference type="ChEBI" id="CHEBI:29105"/>
        <label>1</label>
    </ligand>
</feature>
<feature type="binding site" evidence="1">
    <location>
        <position position="110"/>
    </location>
    <ligand>
        <name>Zn(2+)</name>
        <dbReference type="ChEBI" id="CHEBI:29105"/>
        <label>1</label>
    </ligand>
</feature>
<feature type="binding site" evidence="1">
    <location>
        <position position="145"/>
    </location>
    <ligand>
        <name>Zn(2+)</name>
        <dbReference type="ChEBI" id="CHEBI:29105"/>
        <label>1</label>
    </ligand>
</feature>
<feature type="binding site" evidence="1">
    <location>
        <position position="145"/>
    </location>
    <ligand>
        <name>Zn(2+)</name>
        <dbReference type="ChEBI" id="CHEBI:29105"/>
        <label>2</label>
    </ligand>
</feature>
<feature type="binding site" evidence="1">
    <location>
        <position position="179"/>
    </location>
    <ligand>
        <name>Zn(2+)</name>
        <dbReference type="ChEBI" id="CHEBI:29105"/>
        <label>2</label>
    </ligand>
</feature>
<feature type="binding site" evidence="1">
    <location>
        <position position="182"/>
    </location>
    <ligand>
        <name>Zn(2+)</name>
        <dbReference type="ChEBI" id="CHEBI:29105"/>
        <label>3</label>
    </ligand>
</feature>
<feature type="binding site" evidence="1">
    <location>
        <position position="214"/>
    </location>
    <ligand>
        <name>Zn(2+)</name>
        <dbReference type="ChEBI" id="CHEBI:29105"/>
        <label>2</label>
    </ligand>
</feature>
<feature type="binding site" evidence="1">
    <location>
        <position position="227"/>
    </location>
    <ligand>
        <name>Zn(2+)</name>
        <dbReference type="ChEBI" id="CHEBI:29105"/>
        <label>3</label>
    </ligand>
</feature>
<feature type="binding site" evidence="1">
    <location>
        <position position="229"/>
    </location>
    <ligand>
        <name>Zn(2+)</name>
        <dbReference type="ChEBI" id="CHEBI:29105"/>
        <label>3</label>
    </ligand>
</feature>
<feature type="binding site" evidence="1">
    <location>
        <position position="259"/>
    </location>
    <ligand>
        <name>Zn(2+)</name>
        <dbReference type="ChEBI" id="CHEBI:29105"/>
        <label>2</label>
    </ligand>
</feature>
<gene>
    <name evidence="1" type="primary">nfo</name>
    <name type="ordered locus">lin1487</name>
</gene>
<reference key="1">
    <citation type="journal article" date="2001" name="Science">
        <title>Comparative genomics of Listeria species.</title>
        <authorList>
            <person name="Glaser P."/>
            <person name="Frangeul L."/>
            <person name="Buchrieser C."/>
            <person name="Rusniok C."/>
            <person name="Amend A."/>
            <person name="Baquero F."/>
            <person name="Berche P."/>
            <person name="Bloecker H."/>
            <person name="Brandt P."/>
            <person name="Chakraborty T."/>
            <person name="Charbit A."/>
            <person name="Chetouani F."/>
            <person name="Couve E."/>
            <person name="de Daruvar A."/>
            <person name="Dehoux P."/>
            <person name="Domann E."/>
            <person name="Dominguez-Bernal G."/>
            <person name="Duchaud E."/>
            <person name="Durant L."/>
            <person name="Dussurget O."/>
            <person name="Entian K.-D."/>
            <person name="Fsihi H."/>
            <person name="Garcia-del Portillo F."/>
            <person name="Garrido P."/>
            <person name="Gautier L."/>
            <person name="Goebel W."/>
            <person name="Gomez-Lopez N."/>
            <person name="Hain T."/>
            <person name="Hauf J."/>
            <person name="Jackson D."/>
            <person name="Jones L.-M."/>
            <person name="Kaerst U."/>
            <person name="Kreft J."/>
            <person name="Kuhn M."/>
            <person name="Kunst F."/>
            <person name="Kurapkat G."/>
            <person name="Madueno E."/>
            <person name="Maitournam A."/>
            <person name="Mata Vicente J."/>
            <person name="Ng E."/>
            <person name="Nedjari H."/>
            <person name="Nordsiek G."/>
            <person name="Novella S."/>
            <person name="de Pablos B."/>
            <person name="Perez-Diaz J.-C."/>
            <person name="Purcell R."/>
            <person name="Remmel B."/>
            <person name="Rose M."/>
            <person name="Schlueter T."/>
            <person name="Simoes N."/>
            <person name="Tierrez A."/>
            <person name="Vazquez-Boland J.-A."/>
            <person name="Voss H."/>
            <person name="Wehland J."/>
            <person name="Cossart P."/>
        </authorList>
    </citation>
    <scope>NUCLEOTIDE SEQUENCE [LARGE SCALE GENOMIC DNA]</scope>
    <source>
        <strain>ATCC BAA-680 / CLIP 11262</strain>
    </source>
</reference>
<dbReference type="EC" id="3.1.21.2" evidence="1"/>
<dbReference type="EMBL" id="AL596168">
    <property type="protein sequence ID" value="CAC96718.1"/>
    <property type="molecule type" value="Genomic_DNA"/>
</dbReference>
<dbReference type="PIR" id="AF1618">
    <property type="entry name" value="AF1618"/>
</dbReference>
<dbReference type="RefSeq" id="WP_010991557.1">
    <property type="nucleotide sequence ID" value="NC_003212.1"/>
</dbReference>
<dbReference type="SMR" id="Q92BR0"/>
<dbReference type="STRING" id="272626.gene:17565818"/>
<dbReference type="GeneID" id="93234868"/>
<dbReference type="KEGG" id="lin:lin1487"/>
<dbReference type="eggNOG" id="COG0648">
    <property type="taxonomic scope" value="Bacteria"/>
</dbReference>
<dbReference type="HOGENOM" id="CLU_025885_4_1_9"/>
<dbReference type="OrthoDB" id="9805666at2"/>
<dbReference type="Proteomes" id="UP000002513">
    <property type="component" value="Chromosome"/>
</dbReference>
<dbReference type="GO" id="GO:0008833">
    <property type="term" value="F:deoxyribonuclease IV (phage-T4-induced) activity"/>
    <property type="evidence" value="ECO:0007669"/>
    <property type="project" value="UniProtKB-UniRule"/>
</dbReference>
<dbReference type="GO" id="GO:0003677">
    <property type="term" value="F:DNA binding"/>
    <property type="evidence" value="ECO:0007669"/>
    <property type="project" value="InterPro"/>
</dbReference>
<dbReference type="GO" id="GO:0003906">
    <property type="term" value="F:DNA-(apurinic or apyrimidinic site) endonuclease activity"/>
    <property type="evidence" value="ECO:0007669"/>
    <property type="project" value="TreeGrafter"/>
</dbReference>
<dbReference type="GO" id="GO:0008081">
    <property type="term" value="F:phosphoric diester hydrolase activity"/>
    <property type="evidence" value="ECO:0007669"/>
    <property type="project" value="TreeGrafter"/>
</dbReference>
<dbReference type="GO" id="GO:0008270">
    <property type="term" value="F:zinc ion binding"/>
    <property type="evidence" value="ECO:0007669"/>
    <property type="project" value="UniProtKB-UniRule"/>
</dbReference>
<dbReference type="GO" id="GO:0006284">
    <property type="term" value="P:base-excision repair"/>
    <property type="evidence" value="ECO:0007669"/>
    <property type="project" value="TreeGrafter"/>
</dbReference>
<dbReference type="CDD" id="cd00019">
    <property type="entry name" value="AP2Ec"/>
    <property type="match status" value="1"/>
</dbReference>
<dbReference type="FunFam" id="3.20.20.150:FF:000001">
    <property type="entry name" value="Probable endonuclease 4"/>
    <property type="match status" value="1"/>
</dbReference>
<dbReference type="Gene3D" id="3.20.20.150">
    <property type="entry name" value="Divalent-metal-dependent TIM barrel enzymes"/>
    <property type="match status" value="1"/>
</dbReference>
<dbReference type="HAMAP" id="MF_00152">
    <property type="entry name" value="Nfo"/>
    <property type="match status" value="1"/>
</dbReference>
<dbReference type="InterPro" id="IPR001719">
    <property type="entry name" value="AP_endonuc_2"/>
</dbReference>
<dbReference type="InterPro" id="IPR018246">
    <property type="entry name" value="AP_endonuc_F2_Zn_BS"/>
</dbReference>
<dbReference type="InterPro" id="IPR036237">
    <property type="entry name" value="Xyl_isomerase-like_sf"/>
</dbReference>
<dbReference type="InterPro" id="IPR013022">
    <property type="entry name" value="Xyl_isomerase-like_TIM-brl"/>
</dbReference>
<dbReference type="NCBIfam" id="TIGR00587">
    <property type="entry name" value="nfo"/>
    <property type="match status" value="1"/>
</dbReference>
<dbReference type="NCBIfam" id="NF002196">
    <property type="entry name" value="PRK01060.1-1"/>
    <property type="match status" value="1"/>
</dbReference>
<dbReference type="PANTHER" id="PTHR21445:SF0">
    <property type="entry name" value="APURINIC-APYRIMIDINIC ENDONUCLEASE"/>
    <property type="match status" value="1"/>
</dbReference>
<dbReference type="PANTHER" id="PTHR21445">
    <property type="entry name" value="ENDONUCLEASE IV ENDODEOXYRIBONUCLEASE IV"/>
    <property type="match status" value="1"/>
</dbReference>
<dbReference type="Pfam" id="PF01261">
    <property type="entry name" value="AP_endonuc_2"/>
    <property type="match status" value="1"/>
</dbReference>
<dbReference type="SMART" id="SM00518">
    <property type="entry name" value="AP2Ec"/>
    <property type="match status" value="1"/>
</dbReference>
<dbReference type="SUPFAM" id="SSF51658">
    <property type="entry name" value="Xylose isomerase-like"/>
    <property type="match status" value="1"/>
</dbReference>
<dbReference type="PROSITE" id="PS00729">
    <property type="entry name" value="AP_NUCLEASE_F2_1"/>
    <property type="match status" value="1"/>
</dbReference>
<dbReference type="PROSITE" id="PS00730">
    <property type="entry name" value="AP_NUCLEASE_F2_2"/>
    <property type="match status" value="1"/>
</dbReference>
<dbReference type="PROSITE" id="PS00731">
    <property type="entry name" value="AP_NUCLEASE_F2_3"/>
    <property type="match status" value="1"/>
</dbReference>
<dbReference type="PROSITE" id="PS51432">
    <property type="entry name" value="AP_NUCLEASE_F2_4"/>
    <property type="match status" value="1"/>
</dbReference>
<sequence length="297" mass="32843">MLRLGSHVSMSGKKMLLGASEEAASYGSNTFMIYTGAPQNTRRKPIEELNIEAGLEHMKAHDMADIVVHAPYIINIGNSVKPETFELGVNFLQSEIERTRALGAKQIVLHPGAHVGEGADKGIKQIIQGLNEALIHDQDVQIALETMAGKGSECGRTFEELAQIIDGVTHNELLSVTFDTCHTHDAGYDIVNDFDGVLNEFDKIIGIDRLKVLHINDSKNERGAHKDRHANIGFGHIGFDALHYIVHHPQLSNIPKILETPYVGEDKASKKAPYKWEIAMLRNGEFDPDLLNKIQNS</sequence>
<proteinExistence type="inferred from homology"/>
<comment type="function">
    <text evidence="1">Endonuclease IV plays a role in DNA repair. It cleaves phosphodiester bonds at apurinic or apyrimidinic (AP) sites, generating a 3'-hydroxyl group and a 5'-terminal sugar phosphate.</text>
</comment>
<comment type="catalytic activity">
    <reaction evidence="1">
        <text>Endonucleolytic cleavage to 5'-phosphooligonucleotide end-products.</text>
        <dbReference type="EC" id="3.1.21.2"/>
    </reaction>
</comment>
<comment type="cofactor">
    <cofactor evidence="1">
        <name>Zn(2+)</name>
        <dbReference type="ChEBI" id="CHEBI:29105"/>
    </cofactor>
    <text evidence="1">Binds 3 Zn(2+) ions.</text>
</comment>
<comment type="similarity">
    <text evidence="1">Belongs to the AP endonuclease 2 family.</text>
</comment>
<accession>Q92BR0</accession>
<name>END4_LISIN</name>
<protein>
    <recommendedName>
        <fullName evidence="1">Probable endonuclease 4</fullName>
        <ecNumber evidence="1">3.1.21.2</ecNumber>
    </recommendedName>
    <alternativeName>
        <fullName evidence="1">Endodeoxyribonuclease IV</fullName>
    </alternativeName>
    <alternativeName>
        <fullName evidence="1">Endonuclease IV</fullName>
    </alternativeName>
</protein>
<evidence type="ECO:0000255" key="1">
    <source>
        <dbReference type="HAMAP-Rule" id="MF_00152"/>
    </source>
</evidence>
<organism>
    <name type="scientific">Listeria innocua serovar 6a (strain ATCC BAA-680 / CLIP 11262)</name>
    <dbReference type="NCBI Taxonomy" id="272626"/>
    <lineage>
        <taxon>Bacteria</taxon>
        <taxon>Bacillati</taxon>
        <taxon>Bacillota</taxon>
        <taxon>Bacilli</taxon>
        <taxon>Bacillales</taxon>
        <taxon>Listeriaceae</taxon>
        <taxon>Listeria</taxon>
    </lineage>
</organism>